<dbReference type="EC" id="2.7.2.1" evidence="1"/>
<dbReference type="EMBL" id="CP000384">
    <property type="protein sequence ID" value="ABG06659.1"/>
    <property type="molecule type" value="Genomic_DNA"/>
</dbReference>
<dbReference type="SMR" id="Q1BEM5"/>
<dbReference type="KEGG" id="mmc:Mmcs_0538"/>
<dbReference type="HOGENOM" id="CLU_020352_0_1_11"/>
<dbReference type="BioCyc" id="MSP164756:G1G6O-550-MONOMER"/>
<dbReference type="UniPathway" id="UPA00340">
    <property type="reaction ID" value="UER00458"/>
</dbReference>
<dbReference type="GO" id="GO:0005737">
    <property type="term" value="C:cytoplasm"/>
    <property type="evidence" value="ECO:0007669"/>
    <property type="project" value="UniProtKB-SubCell"/>
</dbReference>
<dbReference type="GO" id="GO:0008776">
    <property type="term" value="F:acetate kinase activity"/>
    <property type="evidence" value="ECO:0007669"/>
    <property type="project" value="UniProtKB-UniRule"/>
</dbReference>
<dbReference type="GO" id="GO:0005524">
    <property type="term" value="F:ATP binding"/>
    <property type="evidence" value="ECO:0007669"/>
    <property type="project" value="UniProtKB-KW"/>
</dbReference>
<dbReference type="GO" id="GO:0000287">
    <property type="term" value="F:magnesium ion binding"/>
    <property type="evidence" value="ECO:0007669"/>
    <property type="project" value="UniProtKB-UniRule"/>
</dbReference>
<dbReference type="GO" id="GO:0006083">
    <property type="term" value="P:acetate metabolic process"/>
    <property type="evidence" value="ECO:0007669"/>
    <property type="project" value="TreeGrafter"/>
</dbReference>
<dbReference type="GO" id="GO:0006085">
    <property type="term" value="P:acetyl-CoA biosynthetic process"/>
    <property type="evidence" value="ECO:0007669"/>
    <property type="project" value="UniProtKB-UniRule"/>
</dbReference>
<dbReference type="CDD" id="cd24010">
    <property type="entry name" value="ASKHA_NBD_AcK_PK"/>
    <property type="match status" value="1"/>
</dbReference>
<dbReference type="Gene3D" id="3.30.420.40">
    <property type="match status" value="2"/>
</dbReference>
<dbReference type="HAMAP" id="MF_00020">
    <property type="entry name" value="Acetate_kinase"/>
    <property type="match status" value="1"/>
</dbReference>
<dbReference type="InterPro" id="IPR004372">
    <property type="entry name" value="Ac/propionate_kinase"/>
</dbReference>
<dbReference type="InterPro" id="IPR000890">
    <property type="entry name" value="Aliphatic_acid_kin_short-chain"/>
</dbReference>
<dbReference type="InterPro" id="IPR023865">
    <property type="entry name" value="Aliphatic_acid_kinase_CS"/>
</dbReference>
<dbReference type="InterPro" id="IPR043129">
    <property type="entry name" value="ATPase_NBD"/>
</dbReference>
<dbReference type="NCBIfam" id="TIGR00016">
    <property type="entry name" value="ackA"/>
    <property type="match status" value="1"/>
</dbReference>
<dbReference type="PANTHER" id="PTHR21060">
    <property type="entry name" value="ACETATE KINASE"/>
    <property type="match status" value="1"/>
</dbReference>
<dbReference type="PANTHER" id="PTHR21060:SF15">
    <property type="entry name" value="ACETATE KINASE-RELATED"/>
    <property type="match status" value="1"/>
</dbReference>
<dbReference type="Pfam" id="PF00871">
    <property type="entry name" value="Acetate_kinase"/>
    <property type="match status" value="1"/>
</dbReference>
<dbReference type="PIRSF" id="PIRSF000722">
    <property type="entry name" value="Acetate_prop_kin"/>
    <property type="match status" value="1"/>
</dbReference>
<dbReference type="PRINTS" id="PR00471">
    <property type="entry name" value="ACETATEKNASE"/>
</dbReference>
<dbReference type="SUPFAM" id="SSF53067">
    <property type="entry name" value="Actin-like ATPase domain"/>
    <property type="match status" value="2"/>
</dbReference>
<dbReference type="PROSITE" id="PS01075">
    <property type="entry name" value="ACETATE_KINASE_1"/>
    <property type="match status" value="1"/>
</dbReference>
<dbReference type="PROSITE" id="PS01076">
    <property type="entry name" value="ACETATE_KINASE_2"/>
    <property type="match status" value="1"/>
</dbReference>
<protein>
    <recommendedName>
        <fullName evidence="1">Acetate kinase</fullName>
        <ecNumber evidence="1">2.7.2.1</ecNumber>
    </recommendedName>
    <alternativeName>
        <fullName evidence="1">Acetokinase</fullName>
    </alternativeName>
</protein>
<feature type="chain" id="PRO_1000002244" description="Acetate kinase">
    <location>
        <begin position="1"/>
        <end position="399"/>
    </location>
</feature>
<feature type="active site" description="Proton donor/acceptor" evidence="1">
    <location>
        <position position="147"/>
    </location>
</feature>
<feature type="binding site" evidence="1">
    <location>
        <position position="9"/>
    </location>
    <ligand>
        <name>Mg(2+)</name>
        <dbReference type="ChEBI" id="CHEBI:18420"/>
    </ligand>
</feature>
<feature type="binding site" evidence="1">
    <location>
        <position position="16"/>
    </location>
    <ligand>
        <name>ATP</name>
        <dbReference type="ChEBI" id="CHEBI:30616"/>
    </ligand>
</feature>
<feature type="binding site" evidence="1">
    <location>
        <position position="90"/>
    </location>
    <ligand>
        <name>substrate</name>
    </ligand>
</feature>
<feature type="binding site" evidence="1">
    <location>
        <begin position="207"/>
        <end position="211"/>
    </location>
    <ligand>
        <name>ATP</name>
        <dbReference type="ChEBI" id="CHEBI:30616"/>
    </ligand>
</feature>
<feature type="binding site" evidence="1">
    <location>
        <begin position="281"/>
        <end position="283"/>
    </location>
    <ligand>
        <name>ATP</name>
        <dbReference type="ChEBI" id="CHEBI:30616"/>
    </ligand>
</feature>
<feature type="binding site" evidence="1">
    <location>
        <begin position="333"/>
        <end position="337"/>
    </location>
    <ligand>
        <name>ATP</name>
        <dbReference type="ChEBI" id="CHEBI:30616"/>
    </ligand>
</feature>
<feature type="binding site" evidence="1">
    <location>
        <position position="387"/>
    </location>
    <ligand>
        <name>Mg(2+)</name>
        <dbReference type="ChEBI" id="CHEBI:18420"/>
    </ligand>
</feature>
<feature type="site" description="Transition state stabilizer" evidence="1">
    <location>
        <position position="179"/>
    </location>
</feature>
<feature type="site" description="Transition state stabilizer" evidence="1">
    <location>
        <position position="240"/>
    </location>
</feature>
<organism>
    <name type="scientific">Mycobacterium sp. (strain MCS)</name>
    <dbReference type="NCBI Taxonomy" id="164756"/>
    <lineage>
        <taxon>Bacteria</taxon>
        <taxon>Bacillati</taxon>
        <taxon>Actinomycetota</taxon>
        <taxon>Actinomycetes</taxon>
        <taxon>Mycobacteriales</taxon>
        <taxon>Mycobacteriaceae</taxon>
        <taxon>Mycobacterium</taxon>
    </lineage>
</organism>
<keyword id="KW-0067">ATP-binding</keyword>
<keyword id="KW-0963">Cytoplasm</keyword>
<keyword id="KW-0418">Kinase</keyword>
<keyword id="KW-0460">Magnesium</keyword>
<keyword id="KW-0479">Metal-binding</keyword>
<keyword id="KW-0547">Nucleotide-binding</keyword>
<keyword id="KW-0808">Transferase</keyword>
<gene>
    <name evidence="1" type="primary">ackA</name>
    <name type="ordered locus">Mmcs_0538</name>
</gene>
<proteinExistence type="inferred from homology"/>
<sequence length="399" mass="42760">MTRTVLVLNSGSSSLKFQLLEPDSGASLADGIVERIGEDSSSASLVCGEREVTHSERVPDHEAALRTAYGLFDEAGAELGSVGLVAVGHRVVHGGPDLYQPTLIDDALVDTLESLAPLAPLHNPPAVLGIRGARKAFPDLPHVAVFDTAYFHDLPVAAATYAIDRDLSEQWHIRRYGFHGTSHQYVSEQAALFLDVPLSSLSQIVLHLGNGASASAILGGRPIDTSMGLTPMEGLVMGTRSGDVDPGVLVYLWRTAGMSVDEIETMLNKRSGVRGLGGEIDFRVLHQRIESGDESDRENAQLAYDVYIHRLRKYIGAYLALLGSTDVIVFTAGVGENDAAVRRDALSGMGRLGIELDEHLNESPSHTARRISAETSPTTVLVIPTNEELAIARACVEVI</sequence>
<name>ACKA_MYCSS</name>
<evidence type="ECO:0000255" key="1">
    <source>
        <dbReference type="HAMAP-Rule" id="MF_00020"/>
    </source>
</evidence>
<reference key="1">
    <citation type="submission" date="2006-06" db="EMBL/GenBank/DDBJ databases">
        <title>Complete sequence of chromosome of Mycobacterium sp. MCS.</title>
        <authorList>
            <consortium name="US DOE Joint Genome Institute"/>
            <person name="Copeland A."/>
            <person name="Lucas S."/>
            <person name="Lapidus A."/>
            <person name="Barry K."/>
            <person name="Detter J.C."/>
            <person name="Glavina del Rio T."/>
            <person name="Hammon N."/>
            <person name="Israni S."/>
            <person name="Dalin E."/>
            <person name="Tice H."/>
            <person name="Pitluck S."/>
            <person name="Martinez M."/>
            <person name="Schmutz J."/>
            <person name="Larimer F."/>
            <person name="Land M."/>
            <person name="Hauser L."/>
            <person name="Kyrpides N."/>
            <person name="Kim E."/>
            <person name="Miller C.D."/>
            <person name="Hughes J.E."/>
            <person name="Anderson A.J."/>
            <person name="Sims R.C."/>
            <person name="Richardson P."/>
        </authorList>
    </citation>
    <scope>NUCLEOTIDE SEQUENCE [LARGE SCALE GENOMIC DNA]</scope>
    <source>
        <strain>MCS</strain>
    </source>
</reference>
<accession>Q1BEM5</accession>
<comment type="function">
    <text evidence="1">Catalyzes the formation of acetyl phosphate from acetate and ATP. Can also catalyze the reverse reaction.</text>
</comment>
<comment type="catalytic activity">
    <reaction evidence="1">
        <text>acetate + ATP = acetyl phosphate + ADP</text>
        <dbReference type="Rhea" id="RHEA:11352"/>
        <dbReference type="ChEBI" id="CHEBI:22191"/>
        <dbReference type="ChEBI" id="CHEBI:30089"/>
        <dbReference type="ChEBI" id="CHEBI:30616"/>
        <dbReference type="ChEBI" id="CHEBI:456216"/>
        <dbReference type="EC" id="2.7.2.1"/>
    </reaction>
</comment>
<comment type="cofactor">
    <cofactor evidence="1">
        <name>Mg(2+)</name>
        <dbReference type="ChEBI" id="CHEBI:18420"/>
    </cofactor>
    <cofactor evidence="1">
        <name>Mn(2+)</name>
        <dbReference type="ChEBI" id="CHEBI:29035"/>
    </cofactor>
    <text evidence="1">Mg(2+). Can also accept Mn(2+).</text>
</comment>
<comment type="pathway">
    <text evidence="1">Metabolic intermediate biosynthesis; acetyl-CoA biosynthesis; acetyl-CoA from acetate: step 1/2.</text>
</comment>
<comment type="subunit">
    <text evidence="1">Homodimer.</text>
</comment>
<comment type="subcellular location">
    <subcellularLocation>
        <location evidence="1">Cytoplasm</location>
    </subcellularLocation>
</comment>
<comment type="similarity">
    <text evidence="1">Belongs to the acetokinase family.</text>
</comment>